<reference key="1">
    <citation type="journal article" date="2006" name="J. Bacteriol.">
        <title>Genome sequence of Aeromonas hydrophila ATCC 7966T: jack of all trades.</title>
        <authorList>
            <person name="Seshadri R."/>
            <person name="Joseph S.W."/>
            <person name="Chopra A.K."/>
            <person name="Sha J."/>
            <person name="Shaw J."/>
            <person name="Graf J."/>
            <person name="Haft D.H."/>
            <person name="Wu M."/>
            <person name="Ren Q."/>
            <person name="Rosovitz M.J."/>
            <person name="Madupu R."/>
            <person name="Tallon L."/>
            <person name="Kim M."/>
            <person name="Jin S."/>
            <person name="Vuong H."/>
            <person name="Stine O.C."/>
            <person name="Ali A."/>
            <person name="Horneman A.J."/>
            <person name="Heidelberg J.F."/>
        </authorList>
    </citation>
    <scope>NUCLEOTIDE SEQUENCE [LARGE SCALE GENOMIC DNA]</scope>
    <source>
        <strain>ATCC 7966 / DSM 30187 / BCRC 13018 / CCUG 14551 / JCM 1027 / KCTC 2358 / NCIMB 9240 / NCTC 8049</strain>
    </source>
</reference>
<sequence>MAKGQSLQDPFLNALRRERIPVSIYLVNGIKLQGQIESFDQFVILLKNTVSQMVYKHAISTVVPARAVNHHQHAPGAAGEEQGEAEA</sequence>
<keyword id="KW-1185">Reference proteome</keyword>
<keyword id="KW-0694">RNA-binding</keyword>
<keyword id="KW-0346">Stress response</keyword>
<gene>
    <name evidence="1" type="primary">hfq</name>
    <name type="ordered locus">AHA_0924</name>
</gene>
<proteinExistence type="inferred from homology"/>
<comment type="function">
    <text evidence="1">RNA chaperone that binds small regulatory RNA (sRNAs) and mRNAs to facilitate mRNA translational regulation in response to envelope stress, environmental stress and changes in metabolite concentrations. Also binds with high specificity to tRNAs.</text>
</comment>
<comment type="subunit">
    <text evidence="1">Homohexamer.</text>
</comment>
<comment type="similarity">
    <text evidence="1">Belongs to the Hfq family.</text>
</comment>
<name>HFQ_AERHH</name>
<feature type="chain" id="PRO_1000025886" description="RNA-binding protein Hfq">
    <location>
        <begin position="1"/>
        <end position="87"/>
    </location>
</feature>
<feature type="domain" description="Sm" evidence="2">
    <location>
        <begin position="9"/>
        <end position="68"/>
    </location>
</feature>
<accession>A0KGS1</accession>
<organism>
    <name type="scientific">Aeromonas hydrophila subsp. hydrophila (strain ATCC 7966 / DSM 30187 / BCRC 13018 / CCUG 14551 / JCM 1027 / KCTC 2358 / NCIMB 9240 / NCTC 8049)</name>
    <dbReference type="NCBI Taxonomy" id="380703"/>
    <lineage>
        <taxon>Bacteria</taxon>
        <taxon>Pseudomonadati</taxon>
        <taxon>Pseudomonadota</taxon>
        <taxon>Gammaproteobacteria</taxon>
        <taxon>Aeromonadales</taxon>
        <taxon>Aeromonadaceae</taxon>
        <taxon>Aeromonas</taxon>
    </lineage>
</organism>
<evidence type="ECO:0000255" key="1">
    <source>
        <dbReference type="HAMAP-Rule" id="MF_00436"/>
    </source>
</evidence>
<evidence type="ECO:0000255" key="2">
    <source>
        <dbReference type="PROSITE-ProRule" id="PRU01346"/>
    </source>
</evidence>
<protein>
    <recommendedName>
        <fullName evidence="1">RNA-binding protein Hfq</fullName>
    </recommendedName>
</protein>
<dbReference type="EMBL" id="CP000462">
    <property type="protein sequence ID" value="ABK37341.1"/>
    <property type="molecule type" value="Genomic_DNA"/>
</dbReference>
<dbReference type="RefSeq" id="WP_011704864.1">
    <property type="nucleotide sequence ID" value="NC_008570.1"/>
</dbReference>
<dbReference type="RefSeq" id="YP_855467.1">
    <property type="nucleotide sequence ID" value="NC_008570.1"/>
</dbReference>
<dbReference type="SMR" id="A0KGS1"/>
<dbReference type="STRING" id="380703.AHA_0924"/>
<dbReference type="EnsemblBacteria" id="ABK37341">
    <property type="protein sequence ID" value="ABK37341"/>
    <property type="gene ID" value="AHA_0924"/>
</dbReference>
<dbReference type="GeneID" id="89579728"/>
<dbReference type="KEGG" id="aha:AHA_0924"/>
<dbReference type="PATRIC" id="fig|380703.7.peg.924"/>
<dbReference type="eggNOG" id="COG1923">
    <property type="taxonomic scope" value="Bacteria"/>
</dbReference>
<dbReference type="HOGENOM" id="CLU_113688_2_2_6"/>
<dbReference type="OrthoDB" id="9799751at2"/>
<dbReference type="Proteomes" id="UP000000756">
    <property type="component" value="Chromosome"/>
</dbReference>
<dbReference type="GO" id="GO:0005829">
    <property type="term" value="C:cytosol"/>
    <property type="evidence" value="ECO:0007669"/>
    <property type="project" value="TreeGrafter"/>
</dbReference>
<dbReference type="GO" id="GO:0003723">
    <property type="term" value="F:RNA binding"/>
    <property type="evidence" value="ECO:0007669"/>
    <property type="project" value="UniProtKB-UniRule"/>
</dbReference>
<dbReference type="GO" id="GO:0006355">
    <property type="term" value="P:regulation of DNA-templated transcription"/>
    <property type="evidence" value="ECO:0007669"/>
    <property type="project" value="InterPro"/>
</dbReference>
<dbReference type="GO" id="GO:0043487">
    <property type="term" value="P:regulation of RNA stability"/>
    <property type="evidence" value="ECO:0007669"/>
    <property type="project" value="TreeGrafter"/>
</dbReference>
<dbReference type="GO" id="GO:0045974">
    <property type="term" value="P:regulation of translation, ncRNA-mediated"/>
    <property type="evidence" value="ECO:0007669"/>
    <property type="project" value="TreeGrafter"/>
</dbReference>
<dbReference type="CDD" id="cd01716">
    <property type="entry name" value="Hfq"/>
    <property type="match status" value="1"/>
</dbReference>
<dbReference type="FunFam" id="2.30.30.100:FF:000001">
    <property type="entry name" value="RNA-binding protein Hfq"/>
    <property type="match status" value="1"/>
</dbReference>
<dbReference type="Gene3D" id="2.30.30.100">
    <property type="match status" value="1"/>
</dbReference>
<dbReference type="HAMAP" id="MF_00436">
    <property type="entry name" value="Hfq"/>
    <property type="match status" value="1"/>
</dbReference>
<dbReference type="InterPro" id="IPR005001">
    <property type="entry name" value="Hfq"/>
</dbReference>
<dbReference type="InterPro" id="IPR010920">
    <property type="entry name" value="LSM_dom_sf"/>
</dbReference>
<dbReference type="InterPro" id="IPR047575">
    <property type="entry name" value="Sm"/>
</dbReference>
<dbReference type="NCBIfam" id="TIGR02383">
    <property type="entry name" value="Hfq"/>
    <property type="match status" value="1"/>
</dbReference>
<dbReference type="NCBIfam" id="NF001602">
    <property type="entry name" value="PRK00395.1"/>
    <property type="match status" value="1"/>
</dbReference>
<dbReference type="PANTHER" id="PTHR34772">
    <property type="entry name" value="RNA-BINDING PROTEIN HFQ"/>
    <property type="match status" value="1"/>
</dbReference>
<dbReference type="PANTHER" id="PTHR34772:SF1">
    <property type="entry name" value="RNA-BINDING PROTEIN HFQ"/>
    <property type="match status" value="1"/>
</dbReference>
<dbReference type="Pfam" id="PF17209">
    <property type="entry name" value="Hfq"/>
    <property type="match status" value="1"/>
</dbReference>
<dbReference type="SUPFAM" id="SSF50182">
    <property type="entry name" value="Sm-like ribonucleoproteins"/>
    <property type="match status" value="1"/>
</dbReference>
<dbReference type="PROSITE" id="PS52002">
    <property type="entry name" value="SM"/>
    <property type="match status" value="1"/>
</dbReference>